<dbReference type="EMBL" id="CU329670">
    <property type="protein sequence ID" value="CAA16983.1"/>
    <property type="molecule type" value="Genomic_DNA"/>
</dbReference>
<dbReference type="PIR" id="T38229">
    <property type="entry name" value="T38229"/>
</dbReference>
<dbReference type="SMR" id="O42847"/>
<dbReference type="BioGRID" id="278482">
    <property type="interactions" value="18"/>
</dbReference>
<dbReference type="FunCoup" id="O42847">
    <property type="interactions" value="949"/>
</dbReference>
<dbReference type="STRING" id="284812.O42847"/>
<dbReference type="iPTMnet" id="O42847"/>
<dbReference type="PaxDb" id="4896-SPAC23A1.09.1"/>
<dbReference type="EnsemblFungi" id="SPAC23A1.09.1">
    <property type="protein sequence ID" value="SPAC23A1.09.1:pep"/>
    <property type="gene ID" value="SPAC23A1.09"/>
</dbReference>
<dbReference type="KEGG" id="spo:2541998"/>
<dbReference type="PomBase" id="SPAC23A1.09"/>
<dbReference type="VEuPathDB" id="FungiDB:SPAC23A1.09"/>
<dbReference type="eggNOG" id="KOG0130">
    <property type="taxonomic scope" value="Eukaryota"/>
</dbReference>
<dbReference type="HOGENOM" id="CLU_012062_18_3_1"/>
<dbReference type="InParanoid" id="O42847"/>
<dbReference type="OMA" id="ESEMQTH"/>
<dbReference type="PhylomeDB" id="O42847"/>
<dbReference type="Reactome" id="R-SPO-159236">
    <property type="pathway name" value="Transport of Mature mRNA derived from an Intron-Containing Transcript"/>
</dbReference>
<dbReference type="Reactome" id="R-SPO-72163">
    <property type="pathway name" value="mRNA Splicing - Major Pathway"/>
</dbReference>
<dbReference type="Reactome" id="R-SPO-975957">
    <property type="pathway name" value="Nonsense Mediated Decay (NMD) enhanced by the Exon Junction Complex (EJC)"/>
</dbReference>
<dbReference type="PRO" id="PR:O42847"/>
<dbReference type="Proteomes" id="UP000002485">
    <property type="component" value="Chromosome I"/>
</dbReference>
<dbReference type="GO" id="GO:0005829">
    <property type="term" value="C:cytosol"/>
    <property type="evidence" value="ECO:0007005"/>
    <property type="project" value="PomBase"/>
</dbReference>
<dbReference type="GO" id="GO:0035145">
    <property type="term" value="C:exon-exon junction complex"/>
    <property type="evidence" value="ECO:0000353"/>
    <property type="project" value="PomBase"/>
</dbReference>
<dbReference type="GO" id="GO:0005634">
    <property type="term" value="C:nucleus"/>
    <property type="evidence" value="ECO:0007005"/>
    <property type="project" value="PomBase"/>
</dbReference>
<dbReference type="GO" id="GO:0003729">
    <property type="term" value="F:mRNA binding"/>
    <property type="evidence" value="ECO:0000318"/>
    <property type="project" value="GO_Central"/>
</dbReference>
<dbReference type="GO" id="GO:0045292">
    <property type="term" value="P:mRNA cis splicing, via spliceosome"/>
    <property type="evidence" value="ECO:0000303"/>
    <property type="project" value="PomBase"/>
</dbReference>
<dbReference type="GO" id="GO:0008380">
    <property type="term" value="P:RNA splicing"/>
    <property type="evidence" value="ECO:0000318"/>
    <property type="project" value="GO_Central"/>
</dbReference>
<dbReference type="CDD" id="cd12324">
    <property type="entry name" value="RRM_RBM8"/>
    <property type="match status" value="1"/>
</dbReference>
<dbReference type="Gene3D" id="3.30.70.330">
    <property type="match status" value="1"/>
</dbReference>
<dbReference type="InterPro" id="IPR012677">
    <property type="entry name" value="Nucleotide-bd_a/b_plait_sf"/>
</dbReference>
<dbReference type="InterPro" id="IPR035979">
    <property type="entry name" value="RBD_domain_sf"/>
</dbReference>
<dbReference type="InterPro" id="IPR008111">
    <property type="entry name" value="RNA-bd_8"/>
</dbReference>
<dbReference type="InterPro" id="IPR000504">
    <property type="entry name" value="RRM_dom"/>
</dbReference>
<dbReference type="InterPro" id="IPR033744">
    <property type="entry name" value="RRM_RBM8"/>
</dbReference>
<dbReference type="PANTHER" id="PTHR45894">
    <property type="entry name" value="RNA-BINDING PROTEIN 8A"/>
    <property type="match status" value="1"/>
</dbReference>
<dbReference type="Pfam" id="PF00076">
    <property type="entry name" value="RRM_1"/>
    <property type="match status" value="1"/>
</dbReference>
<dbReference type="SMART" id="SM00360">
    <property type="entry name" value="RRM"/>
    <property type="match status" value="1"/>
</dbReference>
<dbReference type="SUPFAM" id="SSF54928">
    <property type="entry name" value="RNA-binding domain, RBD"/>
    <property type="match status" value="1"/>
</dbReference>
<dbReference type="PROSITE" id="PS50102">
    <property type="entry name" value="RRM"/>
    <property type="match status" value="1"/>
</dbReference>
<gene>
    <name type="ORF">SPAC23A1.09</name>
</gene>
<protein>
    <recommendedName>
        <fullName>Uncharacterized RNA-binding protein C23A1.09</fullName>
    </recommendedName>
</protein>
<accession>O42847</accession>
<organism>
    <name type="scientific">Schizosaccharomyces pombe (strain 972 / ATCC 24843)</name>
    <name type="common">Fission yeast</name>
    <dbReference type="NCBI Taxonomy" id="284812"/>
    <lineage>
        <taxon>Eukaryota</taxon>
        <taxon>Fungi</taxon>
        <taxon>Dikarya</taxon>
        <taxon>Ascomycota</taxon>
        <taxon>Taphrinomycotina</taxon>
        <taxon>Schizosaccharomycetes</taxon>
        <taxon>Schizosaccharomycetales</taxon>
        <taxon>Schizosaccharomycetaceae</taxon>
        <taxon>Schizosaccharomyces</taxon>
    </lineage>
</organism>
<keyword id="KW-0963">Cytoplasm</keyword>
<keyword id="KW-0539">Nucleus</keyword>
<keyword id="KW-1185">Reference proteome</keyword>
<keyword id="KW-0694">RNA-binding</keyword>
<name>YFH9_SCHPO</name>
<proteinExistence type="predicted"/>
<reference key="1">
    <citation type="journal article" date="2002" name="Nature">
        <title>The genome sequence of Schizosaccharomyces pombe.</title>
        <authorList>
            <person name="Wood V."/>
            <person name="Gwilliam R."/>
            <person name="Rajandream M.A."/>
            <person name="Lyne M.H."/>
            <person name="Lyne R."/>
            <person name="Stewart A."/>
            <person name="Sgouros J.G."/>
            <person name="Peat N."/>
            <person name="Hayles J."/>
            <person name="Baker S.G."/>
            <person name="Basham D."/>
            <person name="Bowman S."/>
            <person name="Brooks K."/>
            <person name="Brown D."/>
            <person name="Brown S."/>
            <person name="Chillingworth T."/>
            <person name="Churcher C.M."/>
            <person name="Collins M."/>
            <person name="Connor R."/>
            <person name="Cronin A."/>
            <person name="Davis P."/>
            <person name="Feltwell T."/>
            <person name="Fraser A."/>
            <person name="Gentles S."/>
            <person name="Goble A."/>
            <person name="Hamlin N."/>
            <person name="Harris D.E."/>
            <person name="Hidalgo J."/>
            <person name="Hodgson G."/>
            <person name="Holroyd S."/>
            <person name="Hornsby T."/>
            <person name="Howarth S."/>
            <person name="Huckle E.J."/>
            <person name="Hunt S."/>
            <person name="Jagels K."/>
            <person name="James K.D."/>
            <person name="Jones L."/>
            <person name="Jones M."/>
            <person name="Leather S."/>
            <person name="McDonald S."/>
            <person name="McLean J."/>
            <person name="Mooney P."/>
            <person name="Moule S."/>
            <person name="Mungall K.L."/>
            <person name="Murphy L.D."/>
            <person name="Niblett D."/>
            <person name="Odell C."/>
            <person name="Oliver K."/>
            <person name="O'Neil S."/>
            <person name="Pearson D."/>
            <person name="Quail M.A."/>
            <person name="Rabbinowitsch E."/>
            <person name="Rutherford K.M."/>
            <person name="Rutter S."/>
            <person name="Saunders D."/>
            <person name="Seeger K."/>
            <person name="Sharp S."/>
            <person name="Skelton J."/>
            <person name="Simmonds M.N."/>
            <person name="Squares R."/>
            <person name="Squares S."/>
            <person name="Stevens K."/>
            <person name="Taylor K."/>
            <person name="Taylor R.G."/>
            <person name="Tivey A."/>
            <person name="Walsh S.V."/>
            <person name="Warren T."/>
            <person name="Whitehead S."/>
            <person name="Woodward J.R."/>
            <person name="Volckaert G."/>
            <person name="Aert R."/>
            <person name="Robben J."/>
            <person name="Grymonprez B."/>
            <person name="Weltjens I."/>
            <person name="Vanstreels E."/>
            <person name="Rieger M."/>
            <person name="Schaefer M."/>
            <person name="Mueller-Auer S."/>
            <person name="Gabel C."/>
            <person name="Fuchs M."/>
            <person name="Duesterhoeft A."/>
            <person name="Fritzc C."/>
            <person name="Holzer E."/>
            <person name="Moestl D."/>
            <person name="Hilbert H."/>
            <person name="Borzym K."/>
            <person name="Langer I."/>
            <person name="Beck A."/>
            <person name="Lehrach H."/>
            <person name="Reinhardt R."/>
            <person name="Pohl T.M."/>
            <person name="Eger P."/>
            <person name="Zimmermann W."/>
            <person name="Wedler H."/>
            <person name="Wambutt R."/>
            <person name="Purnelle B."/>
            <person name="Goffeau A."/>
            <person name="Cadieu E."/>
            <person name="Dreano S."/>
            <person name="Gloux S."/>
            <person name="Lelaure V."/>
            <person name="Mottier S."/>
            <person name="Galibert F."/>
            <person name="Aves S.J."/>
            <person name="Xiang Z."/>
            <person name="Hunt C."/>
            <person name="Moore K."/>
            <person name="Hurst S.M."/>
            <person name="Lucas M."/>
            <person name="Rochet M."/>
            <person name="Gaillardin C."/>
            <person name="Tallada V.A."/>
            <person name="Garzon A."/>
            <person name="Thode G."/>
            <person name="Daga R.R."/>
            <person name="Cruzado L."/>
            <person name="Jimenez J."/>
            <person name="Sanchez M."/>
            <person name="del Rey F."/>
            <person name="Benito J."/>
            <person name="Dominguez A."/>
            <person name="Revuelta J.L."/>
            <person name="Moreno S."/>
            <person name="Armstrong J."/>
            <person name="Forsburg S.L."/>
            <person name="Cerutti L."/>
            <person name="Lowe T."/>
            <person name="McCombie W.R."/>
            <person name="Paulsen I."/>
            <person name="Potashkin J."/>
            <person name="Shpakovski G.V."/>
            <person name="Ussery D."/>
            <person name="Barrell B.G."/>
            <person name="Nurse P."/>
        </authorList>
    </citation>
    <scope>NUCLEOTIDE SEQUENCE [LARGE SCALE GENOMIC DNA]</scope>
    <source>
        <strain>972 / ATCC 24843</strain>
    </source>
</reference>
<reference key="2">
    <citation type="journal article" date="2006" name="Nat. Biotechnol.">
        <title>ORFeome cloning and global analysis of protein localization in the fission yeast Schizosaccharomyces pombe.</title>
        <authorList>
            <person name="Matsuyama A."/>
            <person name="Arai R."/>
            <person name="Yashiroda Y."/>
            <person name="Shirai A."/>
            <person name="Kamata A."/>
            <person name="Sekido S."/>
            <person name="Kobayashi Y."/>
            <person name="Hashimoto A."/>
            <person name="Hamamoto M."/>
            <person name="Hiraoka Y."/>
            <person name="Horinouchi S."/>
            <person name="Yoshida M."/>
        </authorList>
    </citation>
    <scope>SUBCELLULAR LOCATION [LARGE SCALE ANALYSIS]</scope>
</reference>
<sequence>MRPAKSVEGYIIIVTGVHPEATEEQVEDLFADFGPVKNLHLNLDRRTGYVKGYALIEYATLEQAQKAVDEKNLSLLDEKLEVDFAFLEPPERAPRPSISTRSRSQSPEVQHRDRDVAMAEP</sequence>
<feature type="chain" id="PRO_0000310810" description="Uncharacterized RNA-binding protein C23A1.09">
    <location>
        <begin position="1"/>
        <end position="121"/>
    </location>
</feature>
<feature type="domain" description="RRM" evidence="1">
    <location>
        <begin position="10"/>
        <end position="87"/>
    </location>
</feature>
<feature type="region of interest" description="Disordered" evidence="2">
    <location>
        <begin position="90"/>
        <end position="121"/>
    </location>
</feature>
<feature type="compositionally biased region" description="Polar residues" evidence="2">
    <location>
        <begin position="97"/>
        <end position="108"/>
    </location>
</feature>
<feature type="compositionally biased region" description="Basic and acidic residues" evidence="2">
    <location>
        <begin position="109"/>
        <end position="121"/>
    </location>
</feature>
<evidence type="ECO:0000255" key="1">
    <source>
        <dbReference type="PROSITE-ProRule" id="PRU00176"/>
    </source>
</evidence>
<evidence type="ECO:0000256" key="2">
    <source>
        <dbReference type="SAM" id="MobiDB-lite"/>
    </source>
</evidence>
<evidence type="ECO:0000269" key="3">
    <source>
    </source>
</evidence>
<comment type="subcellular location">
    <subcellularLocation>
        <location evidence="3">Cytoplasm</location>
    </subcellularLocation>
    <subcellularLocation>
        <location evidence="3">Nucleus</location>
    </subcellularLocation>
</comment>